<gene>
    <name evidence="1" type="primary">aroE</name>
    <name type="ordered locus">CPE0700</name>
</gene>
<reference key="1">
    <citation type="journal article" date="2002" name="Proc. Natl. Acad. Sci. U.S.A.">
        <title>Complete genome sequence of Clostridium perfringens, an anaerobic flesh-eater.</title>
        <authorList>
            <person name="Shimizu T."/>
            <person name="Ohtani K."/>
            <person name="Hirakawa H."/>
            <person name="Ohshima K."/>
            <person name="Yamashita A."/>
            <person name="Shiba T."/>
            <person name="Ogasawara N."/>
            <person name="Hattori M."/>
            <person name="Kuhara S."/>
            <person name="Hayashi H."/>
        </authorList>
    </citation>
    <scope>NUCLEOTIDE SEQUENCE [LARGE SCALE GENOMIC DNA]</scope>
    <source>
        <strain>13 / Type A</strain>
    </source>
</reference>
<dbReference type="EC" id="1.1.1.25" evidence="1"/>
<dbReference type="EMBL" id="BA000016">
    <property type="protein sequence ID" value="BAB80406.1"/>
    <property type="molecule type" value="Genomic_DNA"/>
</dbReference>
<dbReference type="RefSeq" id="WP_011009980.1">
    <property type="nucleotide sequence ID" value="NC_003366.1"/>
</dbReference>
<dbReference type="SMR" id="Q8XMI8"/>
<dbReference type="STRING" id="195102.gene:10489962"/>
<dbReference type="KEGG" id="cpe:CPE0700"/>
<dbReference type="HOGENOM" id="CLU_044063_4_1_9"/>
<dbReference type="UniPathway" id="UPA00053">
    <property type="reaction ID" value="UER00087"/>
</dbReference>
<dbReference type="Proteomes" id="UP000000818">
    <property type="component" value="Chromosome"/>
</dbReference>
<dbReference type="GO" id="GO:0005829">
    <property type="term" value="C:cytosol"/>
    <property type="evidence" value="ECO:0007669"/>
    <property type="project" value="TreeGrafter"/>
</dbReference>
<dbReference type="GO" id="GO:0050661">
    <property type="term" value="F:NADP binding"/>
    <property type="evidence" value="ECO:0007669"/>
    <property type="project" value="InterPro"/>
</dbReference>
<dbReference type="GO" id="GO:0004764">
    <property type="term" value="F:shikimate 3-dehydrogenase (NADP+) activity"/>
    <property type="evidence" value="ECO:0007669"/>
    <property type="project" value="UniProtKB-UniRule"/>
</dbReference>
<dbReference type="GO" id="GO:0008652">
    <property type="term" value="P:amino acid biosynthetic process"/>
    <property type="evidence" value="ECO:0007669"/>
    <property type="project" value="UniProtKB-KW"/>
</dbReference>
<dbReference type="GO" id="GO:0009073">
    <property type="term" value="P:aromatic amino acid family biosynthetic process"/>
    <property type="evidence" value="ECO:0007669"/>
    <property type="project" value="UniProtKB-KW"/>
</dbReference>
<dbReference type="GO" id="GO:0009423">
    <property type="term" value="P:chorismate biosynthetic process"/>
    <property type="evidence" value="ECO:0007669"/>
    <property type="project" value="UniProtKB-UniRule"/>
</dbReference>
<dbReference type="GO" id="GO:0019632">
    <property type="term" value="P:shikimate metabolic process"/>
    <property type="evidence" value="ECO:0007669"/>
    <property type="project" value="InterPro"/>
</dbReference>
<dbReference type="CDD" id="cd01065">
    <property type="entry name" value="NAD_bind_Shikimate_DH"/>
    <property type="match status" value="1"/>
</dbReference>
<dbReference type="Gene3D" id="3.40.50.10860">
    <property type="entry name" value="Leucine Dehydrogenase, chain A, domain 1"/>
    <property type="match status" value="1"/>
</dbReference>
<dbReference type="Gene3D" id="3.40.50.720">
    <property type="entry name" value="NAD(P)-binding Rossmann-like Domain"/>
    <property type="match status" value="1"/>
</dbReference>
<dbReference type="HAMAP" id="MF_00222">
    <property type="entry name" value="Shikimate_DH_AroE"/>
    <property type="match status" value="1"/>
</dbReference>
<dbReference type="InterPro" id="IPR046346">
    <property type="entry name" value="Aminoacid_DH-like_N_sf"/>
</dbReference>
<dbReference type="InterPro" id="IPR036291">
    <property type="entry name" value="NAD(P)-bd_dom_sf"/>
</dbReference>
<dbReference type="InterPro" id="IPR011342">
    <property type="entry name" value="Shikimate_DH"/>
</dbReference>
<dbReference type="InterPro" id="IPR013708">
    <property type="entry name" value="Shikimate_DH-bd_N"/>
</dbReference>
<dbReference type="InterPro" id="IPR022893">
    <property type="entry name" value="Shikimate_DH_fam"/>
</dbReference>
<dbReference type="InterPro" id="IPR006151">
    <property type="entry name" value="Shikm_DH/Glu-tRNA_Rdtase"/>
</dbReference>
<dbReference type="NCBIfam" id="TIGR00507">
    <property type="entry name" value="aroE"/>
    <property type="match status" value="1"/>
</dbReference>
<dbReference type="PANTHER" id="PTHR21089:SF1">
    <property type="entry name" value="BIFUNCTIONAL 3-DEHYDROQUINATE DEHYDRATASE_SHIKIMATE DEHYDROGENASE, CHLOROPLASTIC"/>
    <property type="match status" value="1"/>
</dbReference>
<dbReference type="PANTHER" id="PTHR21089">
    <property type="entry name" value="SHIKIMATE DEHYDROGENASE"/>
    <property type="match status" value="1"/>
</dbReference>
<dbReference type="Pfam" id="PF01488">
    <property type="entry name" value="Shikimate_DH"/>
    <property type="match status" value="1"/>
</dbReference>
<dbReference type="Pfam" id="PF08501">
    <property type="entry name" value="Shikimate_dh_N"/>
    <property type="match status" value="1"/>
</dbReference>
<dbReference type="SUPFAM" id="SSF53223">
    <property type="entry name" value="Aminoacid dehydrogenase-like, N-terminal domain"/>
    <property type="match status" value="1"/>
</dbReference>
<dbReference type="SUPFAM" id="SSF51735">
    <property type="entry name" value="NAD(P)-binding Rossmann-fold domains"/>
    <property type="match status" value="1"/>
</dbReference>
<accession>Q8XMI8</accession>
<feature type="chain" id="PRO_0000136000" description="Shikimate dehydrogenase (NADP(+))">
    <location>
        <begin position="1"/>
        <end position="271"/>
    </location>
</feature>
<feature type="active site" description="Proton acceptor" evidence="1">
    <location>
        <position position="65"/>
    </location>
</feature>
<feature type="binding site" evidence="1">
    <location>
        <begin position="14"/>
        <end position="16"/>
    </location>
    <ligand>
        <name>shikimate</name>
        <dbReference type="ChEBI" id="CHEBI:36208"/>
    </ligand>
</feature>
<feature type="binding site" evidence="1">
    <location>
        <position position="61"/>
    </location>
    <ligand>
        <name>shikimate</name>
        <dbReference type="ChEBI" id="CHEBI:36208"/>
    </ligand>
</feature>
<feature type="binding site" evidence="1">
    <location>
        <position position="86"/>
    </location>
    <ligand>
        <name>shikimate</name>
        <dbReference type="ChEBI" id="CHEBI:36208"/>
    </ligand>
</feature>
<feature type="binding site" evidence="1">
    <location>
        <position position="101"/>
    </location>
    <ligand>
        <name>shikimate</name>
        <dbReference type="ChEBI" id="CHEBI:36208"/>
    </ligand>
</feature>
<feature type="binding site" evidence="1">
    <location>
        <begin position="125"/>
        <end position="129"/>
    </location>
    <ligand>
        <name>NADP(+)</name>
        <dbReference type="ChEBI" id="CHEBI:58349"/>
    </ligand>
</feature>
<feature type="binding site" evidence="1">
    <location>
        <position position="212"/>
    </location>
    <ligand>
        <name>NADP(+)</name>
        <dbReference type="ChEBI" id="CHEBI:58349"/>
    </ligand>
</feature>
<feature type="binding site" evidence="1">
    <location>
        <position position="214"/>
    </location>
    <ligand>
        <name>shikimate</name>
        <dbReference type="ChEBI" id="CHEBI:36208"/>
    </ligand>
</feature>
<feature type="binding site" evidence="1">
    <location>
        <position position="235"/>
    </location>
    <ligand>
        <name>NADP(+)</name>
        <dbReference type="ChEBI" id="CHEBI:58349"/>
    </ligand>
</feature>
<organism>
    <name type="scientific">Clostridium perfringens (strain 13 / Type A)</name>
    <dbReference type="NCBI Taxonomy" id="195102"/>
    <lineage>
        <taxon>Bacteria</taxon>
        <taxon>Bacillati</taxon>
        <taxon>Bacillota</taxon>
        <taxon>Clostridia</taxon>
        <taxon>Eubacteriales</taxon>
        <taxon>Clostridiaceae</taxon>
        <taxon>Clostridium</taxon>
    </lineage>
</organism>
<comment type="function">
    <text evidence="1">Involved in the biosynthesis of the chorismate, which leads to the biosynthesis of aromatic amino acids. Catalyzes the reversible NADPH linked reduction of 3-dehydroshikimate (DHSA) to yield shikimate (SA).</text>
</comment>
<comment type="catalytic activity">
    <reaction evidence="1">
        <text>shikimate + NADP(+) = 3-dehydroshikimate + NADPH + H(+)</text>
        <dbReference type="Rhea" id="RHEA:17737"/>
        <dbReference type="ChEBI" id="CHEBI:15378"/>
        <dbReference type="ChEBI" id="CHEBI:16630"/>
        <dbReference type="ChEBI" id="CHEBI:36208"/>
        <dbReference type="ChEBI" id="CHEBI:57783"/>
        <dbReference type="ChEBI" id="CHEBI:58349"/>
        <dbReference type="EC" id="1.1.1.25"/>
    </reaction>
</comment>
<comment type="pathway">
    <text evidence="1">Metabolic intermediate biosynthesis; chorismate biosynthesis; chorismate from D-erythrose 4-phosphate and phosphoenolpyruvate: step 4/7.</text>
</comment>
<comment type="subunit">
    <text evidence="1">Homodimer.</text>
</comment>
<comment type="similarity">
    <text evidence="1">Belongs to the shikimate dehydrogenase family.</text>
</comment>
<protein>
    <recommendedName>
        <fullName evidence="1">Shikimate dehydrogenase (NADP(+))</fullName>
        <shortName evidence="1">SDH</shortName>
        <ecNumber evidence="1">1.1.1.25</ecNumber>
    </recommendedName>
</protein>
<name>AROE_CLOPE</name>
<proteinExistence type="inferred from homology"/>
<keyword id="KW-0028">Amino-acid biosynthesis</keyword>
<keyword id="KW-0057">Aromatic amino acid biosynthesis</keyword>
<keyword id="KW-0521">NADP</keyword>
<keyword id="KW-0560">Oxidoreductase</keyword>
<keyword id="KW-1185">Reference proteome</keyword>
<sequence>MKLFGLIGEKLGHSLSPEIHNKVFKDNNIDGLYNLFSVKKDFENNIVESLKCLGVKGANVTIPYKEKVMDQLDIISHEAKVIGAVNTILIKDGKSYGYNTDYYGFGKMLERAKVNIEGNSFFVLGAGGAARSILKYLEDSKAKKIVLVSRDKEKAFKKFKDFNINFMSYGELEEINEEFALINTTPCGMYPNTNSVAVSEKVIKKFKVAVDIVYNPLETKFLKMAKDNGLKTVDGLFMLVGQGVKAEEIWNGIKVDKSTEEEIYEELKCRF</sequence>
<evidence type="ECO:0000255" key="1">
    <source>
        <dbReference type="HAMAP-Rule" id="MF_00222"/>
    </source>
</evidence>